<proteinExistence type="inferred from homology"/>
<name>RL16_HELPG</name>
<keyword id="KW-1185">Reference proteome</keyword>
<keyword id="KW-0687">Ribonucleoprotein</keyword>
<keyword id="KW-0689">Ribosomal protein</keyword>
<keyword id="KW-0694">RNA-binding</keyword>
<keyword id="KW-0699">rRNA-binding</keyword>
<keyword id="KW-0820">tRNA-binding</keyword>
<sequence>MLMPKRTKYRKQMKGRNRGKAHRGNSIAFGDIAIKAIEHGRIDSRQIESARVAMTRHIKRAGKVWIRVFPDKPLTAKPLETRMGKGKGSVEKWVMNIKPGRIVYEMLGIEEGLAREALALAQSKLPFKTKIVTCESENEIY</sequence>
<accession>B5Z8W0</accession>
<feature type="chain" id="PRO_1000142981" description="Large ribosomal subunit protein uL16">
    <location>
        <begin position="1"/>
        <end position="141"/>
    </location>
</feature>
<feature type="region of interest" description="Disordered" evidence="2">
    <location>
        <begin position="1"/>
        <end position="23"/>
    </location>
</feature>
<dbReference type="EMBL" id="CP001173">
    <property type="protein sequence ID" value="ACI28009.1"/>
    <property type="molecule type" value="Genomic_DNA"/>
</dbReference>
<dbReference type="RefSeq" id="WP_000928961.1">
    <property type="nucleotide sequence ID" value="NC_011333.1"/>
</dbReference>
<dbReference type="SMR" id="B5Z8W0"/>
<dbReference type="GeneID" id="93237557"/>
<dbReference type="KEGG" id="hpg:HPG27_1261"/>
<dbReference type="HOGENOM" id="CLU_078858_2_1_7"/>
<dbReference type="Proteomes" id="UP000001735">
    <property type="component" value="Chromosome"/>
</dbReference>
<dbReference type="GO" id="GO:0022625">
    <property type="term" value="C:cytosolic large ribosomal subunit"/>
    <property type="evidence" value="ECO:0007669"/>
    <property type="project" value="TreeGrafter"/>
</dbReference>
<dbReference type="GO" id="GO:0019843">
    <property type="term" value="F:rRNA binding"/>
    <property type="evidence" value="ECO:0007669"/>
    <property type="project" value="UniProtKB-UniRule"/>
</dbReference>
<dbReference type="GO" id="GO:0003735">
    <property type="term" value="F:structural constituent of ribosome"/>
    <property type="evidence" value="ECO:0007669"/>
    <property type="project" value="InterPro"/>
</dbReference>
<dbReference type="GO" id="GO:0000049">
    <property type="term" value="F:tRNA binding"/>
    <property type="evidence" value="ECO:0007669"/>
    <property type="project" value="UniProtKB-KW"/>
</dbReference>
<dbReference type="GO" id="GO:0006412">
    <property type="term" value="P:translation"/>
    <property type="evidence" value="ECO:0007669"/>
    <property type="project" value="UniProtKB-UniRule"/>
</dbReference>
<dbReference type="CDD" id="cd01433">
    <property type="entry name" value="Ribosomal_L16_L10e"/>
    <property type="match status" value="1"/>
</dbReference>
<dbReference type="FunFam" id="3.90.1170.10:FF:000001">
    <property type="entry name" value="50S ribosomal protein L16"/>
    <property type="match status" value="1"/>
</dbReference>
<dbReference type="Gene3D" id="3.90.1170.10">
    <property type="entry name" value="Ribosomal protein L10e/L16"/>
    <property type="match status" value="1"/>
</dbReference>
<dbReference type="HAMAP" id="MF_01342">
    <property type="entry name" value="Ribosomal_uL16"/>
    <property type="match status" value="1"/>
</dbReference>
<dbReference type="InterPro" id="IPR047873">
    <property type="entry name" value="Ribosomal_uL16"/>
</dbReference>
<dbReference type="InterPro" id="IPR000114">
    <property type="entry name" value="Ribosomal_uL16_bact-type"/>
</dbReference>
<dbReference type="InterPro" id="IPR020798">
    <property type="entry name" value="Ribosomal_uL16_CS"/>
</dbReference>
<dbReference type="InterPro" id="IPR016180">
    <property type="entry name" value="Ribosomal_uL16_dom"/>
</dbReference>
<dbReference type="InterPro" id="IPR036920">
    <property type="entry name" value="Ribosomal_uL16_sf"/>
</dbReference>
<dbReference type="NCBIfam" id="TIGR01164">
    <property type="entry name" value="rplP_bact"/>
    <property type="match status" value="1"/>
</dbReference>
<dbReference type="PANTHER" id="PTHR12220">
    <property type="entry name" value="50S/60S RIBOSOMAL PROTEIN L16"/>
    <property type="match status" value="1"/>
</dbReference>
<dbReference type="PANTHER" id="PTHR12220:SF13">
    <property type="entry name" value="LARGE RIBOSOMAL SUBUNIT PROTEIN UL16M"/>
    <property type="match status" value="1"/>
</dbReference>
<dbReference type="Pfam" id="PF00252">
    <property type="entry name" value="Ribosomal_L16"/>
    <property type="match status" value="1"/>
</dbReference>
<dbReference type="PRINTS" id="PR00060">
    <property type="entry name" value="RIBOSOMALL16"/>
</dbReference>
<dbReference type="SUPFAM" id="SSF54686">
    <property type="entry name" value="Ribosomal protein L16p/L10e"/>
    <property type="match status" value="1"/>
</dbReference>
<dbReference type="PROSITE" id="PS00586">
    <property type="entry name" value="RIBOSOMAL_L16_1"/>
    <property type="match status" value="1"/>
</dbReference>
<dbReference type="PROSITE" id="PS00701">
    <property type="entry name" value="RIBOSOMAL_L16_2"/>
    <property type="match status" value="1"/>
</dbReference>
<comment type="function">
    <text evidence="1">Binds 23S rRNA and is also seen to make contacts with the A and possibly P site tRNAs.</text>
</comment>
<comment type="subunit">
    <text evidence="1">Part of the 50S ribosomal subunit.</text>
</comment>
<comment type="similarity">
    <text evidence="1">Belongs to the universal ribosomal protein uL16 family.</text>
</comment>
<reference key="1">
    <citation type="journal article" date="2009" name="J. Bacteriol.">
        <title>The complete genome sequence of Helicobacter pylori strain G27.</title>
        <authorList>
            <person name="Baltrus D.A."/>
            <person name="Amieva M.R."/>
            <person name="Covacci A."/>
            <person name="Lowe T.M."/>
            <person name="Merrell D.S."/>
            <person name="Ottemann K.M."/>
            <person name="Stein M."/>
            <person name="Salama N.R."/>
            <person name="Guillemin K."/>
        </authorList>
    </citation>
    <scope>NUCLEOTIDE SEQUENCE [LARGE SCALE GENOMIC DNA]</scope>
    <source>
        <strain>G27</strain>
    </source>
</reference>
<evidence type="ECO:0000255" key="1">
    <source>
        <dbReference type="HAMAP-Rule" id="MF_01342"/>
    </source>
</evidence>
<evidence type="ECO:0000256" key="2">
    <source>
        <dbReference type="SAM" id="MobiDB-lite"/>
    </source>
</evidence>
<evidence type="ECO:0000305" key="3"/>
<gene>
    <name evidence="1" type="primary">rplP</name>
    <name type="ordered locus">HPG27_1261</name>
</gene>
<organism>
    <name type="scientific">Helicobacter pylori (strain G27)</name>
    <dbReference type="NCBI Taxonomy" id="563041"/>
    <lineage>
        <taxon>Bacteria</taxon>
        <taxon>Pseudomonadati</taxon>
        <taxon>Campylobacterota</taxon>
        <taxon>Epsilonproteobacteria</taxon>
        <taxon>Campylobacterales</taxon>
        <taxon>Helicobacteraceae</taxon>
        <taxon>Helicobacter</taxon>
    </lineage>
</organism>
<protein>
    <recommendedName>
        <fullName evidence="1">Large ribosomal subunit protein uL16</fullName>
    </recommendedName>
    <alternativeName>
        <fullName evidence="3">50S ribosomal protein L16</fullName>
    </alternativeName>
</protein>